<accession>B8F6A3</accession>
<dbReference type="EC" id="3.1.2.6" evidence="1"/>
<dbReference type="EMBL" id="CP001321">
    <property type="protein sequence ID" value="ACL32855.1"/>
    <property type="molecule type" value="Genomic_DNA"/>
</dbReference>
<dbReference type="RefSeq" id="WP_010786128.1">
    <property type="nucleotide sequence ID" value="NC_011852.1"/>
</dbReference>
<dbReference type="SMR" id="B8F6A3"/>
<dbReference type="STRING" id="557723.HAPS_1262"/>
<dbReference type="GeneID" id="66618224"/>
<dbReference type="KEGG" id="hap:HAPS_1262"/>
<dbReference type="HOGENOM" id="CLU_030571_4_1_6"/>
<dbReference type="UniPathway" id="UPA00619">
    <property type="reaction ID" value="UER00676"/>
</dbReference>
<dbReference type="Proteomes" id="UP000006743">
    <property type="component" value="Chromosome"/>
</dbReference>
<dbReference type="GO" id="GO:0004416">
    <property type="term" value="F:hydroxyacylglutathione hydrolase activity"/>
    <property type="evidence" value="ECO:0007669"/>
    <property type="project" value="UniProtKB-UniRule"/>
</dbReference>
<dbReference type="GO" id="GO:0046872">
    <property type="term" value="F:metal ion binding"/>
    <property type="evidence" value="ECO:0007669"/>
    <property type="project" value="UniProtKB-KW"/>
</dbReference>
<dbReference type="GO" id="GO:0019243">
    <property type="term" value="P:methylglyoxal catabolic process to D-lactate via S-lactoyl-glutathione"/>
    <property type="evidence" value="ECO:0007669"/>
    <property type="project" value="InterPro"/>
</dbReference>
<dbReference type="CDD" id="cd07723">
    <property type="entry name" value="hydroxyacylglutathione_hydrolase_MBL-fold"/>
    <property type="match status" value="1"/>
</dbReference>
<dbReference type="Gene3D" id="3.60.15.10">
    <property type="entry name" value="Ribonuclease Z/Hydroxyacylglutathione hydrolase-like"/>
    <property type="match status" value="1"/>
</dbReference>
<dbReference type="HAMAP" id="MF_01374">
    <property type="entry name" value="Glyoxalase_2"/>
    <property type="match status" value="1"/>
</dbReference>
<dbReference type="InterPro" id="IPR035680">
    <property type="entry name" value="Clx_II_MBL"/>
</dbReference>
<dbReference type="InterPro" id="IPR050110">
    <property type="entry name" value="Glyoxalase_II_hydrolase"/>
</dbReference>
<dbReference type="InterPro" id="IPR032282">
    <property type="entry name" value="HAGH_C"/>
</dbReference>
<dbReference type="InterPro" id="IPR017782">
    <property type="entry name" value="Hydroxyacylglutathione_Hdrlase"/>
</dbReference>
<dbReference type="InterPro" id="IPR001279">
    <property type="entry name" value="Metallo-B-lactamas"/>
</dbReference>
<dbReference type="InterPro" id="IPR036866">
    <property type="entry name" value="RibonucZ/Hydroxyglut_hydro"/>
</dbReference>
<dbReference type="NCBIfam" id="TIGR03413">
    <property type="entry name" value="GSH_gloB"/>
    <property type="match status" value="1"/>
</dbReference>
<dbReference type="PANTHER" id="PTHR43705">
    <property type="entry name" value="HYDROXYACYLGLUTATHIONE HYDROLASE"/>
    <property type="match status" value="1"/>
</dbReference>
<dbReference type="PANTHER" id="PTHR43705:SF1">
    <property type="entry name" value="HYDROXYACYLGLUTATHIONE HYDROLASE GLOB"/>
    <property type="match status" value="1"/>
</dbReference>
<dbReference type="Pfam" id="PF16123">
    <property type="entry name" value="HAGH_C"/>
    <property type="match status" value="1"/>
</dbReference>
<dbReference type="Pfam" id="PF00753">
    <property type="entry name" value="Lactamase_B"/>
    <property type="match status" value="1"/>
</dbReference>
<dbReference type="SMART" id="SM00849">
    <property type="entry name" value="Lactamase_B"/>
    <property type="match status" value="1"/>
</dbReference>
<dbReference type="SUPFAM" id="SSF56281">
    <property type="entry name" value="Metallo-hydrolase/oxidoreductase"/>
    <property type="match status" value="1"/>
</dbReference>
<gene>
    <name evidence="1" type="primary">gloB</name>
    <name type="ordered locus">HAPS_1262</name>
</gene>
<feature type="chain" id="PRO_1000184180" description="Hydroxyacylglutathione hydrolase">
    <location>
        <begin position="1"/>
        <end position="235"/>
    </location>
</feature>
<feature type="binding site" evidence="1">
    <location>
        <position position="53"/>
    </location>
    <ligand>
        <name>Zn(2+)</name>
        <dbReference type="ChEBI" id="CHEBI:29105"/>
        <label>1</label>
    </ligand>
</feature>
<feature type="binding site" evidence="1">
    <location>
        <position position="55"/>
    </location>
    <ligand>
        <name>Zn(2+)</name>
        <dbReference type="ChEBI" id="CHEBI:29105"/>
        <label>1</label>
    </ligand>
</feature>
<feature type="binding site" evidence="1">
    <location>
        <position position="57"/>
    </location>
    <ligand>
        <name>Zn(2+)</name>
        <dbReference type="ChEBI" id="CHEBI:29105"/>
        <label>2</label>
    </ligand>
</feature>
<feature type="binding site" evidence="1">
    <location>
        <position position="58"/>
    </location>
    <ligand>
        <name>Zn(2+)</name>
        <dbReference type="ChEBI" id="CHEBI:29105"/>
        <label>2</label>
    </ligand>
</feature>
<feature type="binding site" evidence="1">
    <location>
        <position position="109"/>
    </location>
    <ligand>
        <name>Zn(2+)</name>
        <dbReference type="ChEBI" id="CHEBI:29105"/>
        <label>1</label>
    </ligand>
</feature>
<feature type="binding site" evidence="1">
    <location>
        <position position="127"/>
    </location>
    <ligand>
        <name>Zn(2+)</name>
        <dbReference type="ChEBI" id="CHEBI:29105"/>
        <label>1</label>
    </ligand>
</feature>
<feature type="binding site" evidence="1">
    <location>
        <position position="127"/>
    </location>
    <ligand>
        <name>Zn(2+)</name>
        <dbReference type="ChEBI" id="CHEBI:29105"/>
        <label>2</label>
    </ligand>
</feature>
<feature type="binding site" evidence="1">
    <location>
        <position position="165"/>
    </location>
    <ligand>
        <name>Zn(2+)</name>
        <dbReference type="ChEBI" id="CHEBI:29105"/>
        <label>2</label>
    </ligand>
</feature>
<comment type="function">
    <text evidence="1">Thiolesterase that catalyzes the hydrolysis of S-D-lactoyl-glutathione to form glutathione and D-lactic acid.</text>
</comment>
<comment type="catalytic activity">
    <reaction evidence="1">
        <text>an S-(2-hydroxyacyl)glutathione + H2O = a 2-hydroxy carboxylate + glutathione + H(+)</text>
        <dbReference type="Rhea" id="RHEA:21864"/>
        <dbReference type="ChEBI" id="CHEBI:15377"/>
        <dbReference type="ChEBI" id="CHEBI:15378"/>
        <dbReference type="ChEBI" id="CHEBI:57925"/>
        <dbReference type="ChEBI" id="CHEBI:58896"/>
        <dbReference type="ChEBI" id="CHEBI:71261"/>
        <dbReference type="EC" id="3.1.2.6"/>
    </reaction>
</comment>
<comment type="cofactor">
    <cofactor evidence="1">
        <name>Zn(2+)</name>
        <dbReference type="ChEBI" id="CHEBI:29105"/>
    </cofactor>
    <text evidence="1">Binds 2 Zn(2+) ions per subunit.</text>
</comment>
<comment type="pathway">
    <text evidence="1">Secondary metabolite metabolism; methylglyoxal degradation; (R)-lactate from methylglyoxal: step 2/2.</text>
</comment>
<comment type="subunit">
    <text evidence="1">Monomer.</text>
</comment>
<comment type="similarity">
    <text evidence="1">Belongs to the metallo-beta-lactamase superfamily. Glyoxalase II family.</text>
</comment>
<organism>
    <name type="scientific">Glaesserella parasuis serovar 5 (strain SH0165)</name>
    <name type="common">Haemophilus parasuis</name>
    <dbReference type="NCBI Taxonomy" id="557723"/>
    <lineage>
        <taxon>Bacteria</taxon>
        <taxon>Pseudomonadati</taxon>
        <taxon>Pseudomonadota</taxon>
        <taxon>Gammaproteobacteria</taxon>
        <taxon>Pasteurellales</taxon>
        <taxon>Pasteurellaceae</taxon>
        <taxon>Glaesserella</taxon>
    </lineage>
</organism>
<keyword id="KW-0378">Hydrolase</keyword>
<keyword id="KW-0479">Metal-binding</keyword>
<keyword id="KW-1185">Reference proteome</keyword>
<keyword id="KW-0862">Zinc</keyword>
<proteinExistence type="inferred from homology"/>
<reference key="1">
    <citation type="journal article" date="2009" name="J. Bacteriol.">
        <title>Complete genome sequence of Haemophilus parasuis SH0165.</title>
        <authorList>
            <person name="Yue M."/>
            <person name="Yang F."/>
            <person name="Yang J."/>
            <person name="Bei W."/>
            <person name="Cai X."/>
            <person name="Chen L."/>
            <person name="Dong J."/>
            <person name="Zhou R."/>
            <person name="Jin M."/>
            <person name="Jin Q."/>
            <person name="Chen H."/>
        </authorList>
    </citation>
    <scope>NUCLEOTIDE SEQUENCE [LARGE SCALE GENOMIC DNA]</scope>
    <source>
        <strain>SH0165</strain>
    </source>
</reference>
<protein>
    <recommendedName>
        <fullName evidence="1">Hydroxyacylglutathione hydrolase</fullName>
        <ecNumber evidence="1">3.1.2.6</ecNumber>
    </recommendedName>
    <alternativeName>
        <fullName evidence="1">Glyoxalase II</fullName>
        <shortName evidence="1">Glx II</shortName>
    </alternativeName>
</protein>
<sequence>MLQITPIPALSDNYIWILQKECQAIIVDPAEAQAVFAFLAKHQLNPTAILLTHNHHDHTDGVAGLVAQFPDMLIYGSEEVSQFANQIVYPEQQFELLGLKVRVIESAGHTAQHISYLVDNEYLFCGDALFSGGCGRVFTGDYQAQFDALQRFKALPDFVKVYAGHEYTQSNLKFAEAVMATSCSLMEHQERADILRSQHKPTLPSTIGVEKQINPFMQAVTLDEFIILRQKKDNF</sequence>
<name>GLO2_GLAP5</name>
<evidence type="ECO:0000255" key="1">
    <source>
        <dbReference type="HAMAP-Rule" id="MF_01374"/>
    </source>
</evidence>